<evidence type="ECO:0000255" key="1">
    <source>
        <dbReference type="HAMAP-Rule" id="MF_00135"/>
    </source>
</evidence>
<dbReference type="EC" id="5.3.1.24" evidence="1"/>
<dbReference type="EMBL" id="CP000103">
    <property type="protein sequence ID" value="ABB75208.1"/>
    <property type="molecule type" value="Genomic_DNA"/>
</dbReference>
<dbReference type="RefSeq" id="WP_011381228.1">
    <property type="nucleotide sequence ID" value="NC_007614.1"/>
</dbReference>
<dbReference type="SMR" id="Q2Y7R3"/>
<dbReference type="STRING" id="323848.Nmul_A1913"/>
<dbReference type="KEGG" id="nmu:Nmul_A1913"/>
<dbReference type="eggNOG" id="COG0135">
    <property type="taxonomic scope" value="Bacteria"/>
</dbReference>
<dbReference type="HOGENOM" id="CLU_076364_2_0_4"/>
<dbReference type="OrthoDB" id="9796196at2"/>
<dbReference type="UniPathway" id="UPA00035">
    <property type="reaction ID" value="UER00042"/>
</dbReference>
<dbReference type="Proteomes" id="UP000002718">
    <property type="component" value="Chromosome"/>
</dbReference>
<dbReference type="GO" id="GO:0004640">
    <property type="term" value="F:phosphoribosylanthranilate isomerase activity"/>
    <property type="evidence" value="ECO:0007669"/>
    <property type="project" value="UniProtKB-UniRule"/>
</dbReference>
<dbReference type="GO" id="GO:0000162">
    <property type="term" value="P:L-tryptophan biosynthetic process"/>
    <property type="evidence" value="ECO:0007669"/>
    <property type="project" value="UniProtKB-UniRule"/>
</dbReference>
<dbReference type="CDD" id="cd00405">
    <property type="entry name" value="PRAI"/>
    <property type="match status" value="1"/>
</dbReference>
<dbReference type="FunFam" id="3.20.20.70:FF:000075">
    <property type="entry name" value="Tryptophan biosynthesis protein TRP1"/>
    <property type="match status" value="1"/>
</dbReference>
<dbReference type="Gene3D" id="3.20.20.70">
    <property type="entry name" value="Aldolase class I"/>
    <property type="match status" value="1"/>
</dbReference>
<dbReference type="HAMAP" id="MF_00135">
    <property type="entry name" value="PRAI"/>
    <property type="match status" value="1"/>
</dbReference>
<dbReference type="InterPro" id="IPR013785">
    <property type="entry name" value="Aldolase_TIM"/>
</dbReference>
<dbReference type="InterPro" id="IPR001240">
    <property type="entry name" value="PRAI_dom"/>
</dbReference>
<dbReference type="InterPro" id="IPR011060">
    <property type="entry name" value="RibuloseP-bd_barrel"/>
</dbReference>
<dbReference type="InterPro" id="IPR044643">
    <property type="entry name" value="TrpF_fam"/>
</dbReference>
<dbReference type="NCBIfam" id="NF002298">
    <property type="entry name" value="PRK01222.1-4"/>
    <property type="match status" value="1"/>
</dbReference>
<dbReference type="NCBIfam" id="NF002299">
    <property type="entry name" value="PRK01222.1-6"/>
    <property type="match status" value="1"/>
</dbReference>
<dbReference type="PANTHER" id="PTHR42894">
    <property type="entry name" value="N-(5'-PHOSPHORIBOSYL)ANTHRANILATE ISOMERASE"/>
    <property type="match status" value="1"/>
</dbReference>
<dbReference type="PANTHER" id="PTHR42894:SF1">
    <property type="entry name" value="N-(5'-PHOSPHORIBOSYL)ANTHRANILATE ISOMERASE"/>
    <property type="match status" value="1"/>
</dbReference>
<dbReference type="Pfam" id="PF00697">
    <property type="entry name" value="PRAI"/>
    <property type="match status" value="1"/>
</dbReference>
<dbReference type="SUPFAM" id="SSF51366">
    <property type="entry name" value="Ribulose-phoshate binding barrel"/>
    <property type="match status" value="1"/>
</dbReference>
<protein>
    <recommendedName>
        <fullName evidence="1">N-(5'-phosphoribosyl)anthranilate isomerase</fullName>
        <shortName evidence="1">PRAI</shortName>
        <ecNumber evidence="1">5.3.1.24</ecNumber>
    </recommendedName>
</protein>
<feature type="chain" id="PRO_1000203212" description="N-(5'-phosphoribosyl)anthranilate isomerase">
    <location>
        <begin position="1"/>
        <end position="208"/>
    </location>
</feature>
<reference key="1">
    <citation type="submission" date="2005-08" db="EMBL/GenBank/DDBJ databases">
        <title>Complete sequence of chromosome 1 of Nitrosospira multiformis ATCC 25196.</title>
        <authorList>
            <person name="Copeland A."/>
            <person name="Lucas S."/>
            <person name="Lapidus A."/>
            <person name="Barry K."/>
            <person name="Detter J.C."/>
            <person name="Glavina T."/>
            <person name="Hammon N."/>
            <person name="Israni S."/>
            <person name="Pitluck S."/>
            <person name="Chain P."/>
            <person name="Malfatti S."/>
            <person name="Shin M."/>
            <person name="Vergez L."/>
            <person name="Schmutz J."/>
            <person name="Larimer F."/>
            <person name="Land M."/>
            <person name="Hauser L."/>
            <person name="Kyrpides N."/>
            <person name="Lykidis A."/>
            <person name="Richardson P."/>
        </authorList>
    </citation>
    <scope>NUCLEOTIDE SEQUENCE [LARGE SCALE GENOMIC DNA]</scope>
    <source>
        <strain>ATCC 25196 / NCIMB 11849 / C 71</strain>
    </source>
</reference>
<comment type="catalytic activity">
    <reaction evidence="1">
        <text>N-(5-phospho-beta-D-ribosyl)anthranilate = 1-(2-carboxyphenylamino)-1-deoxy-D-ribulose 5-phosphate</text>
        <dbReference type="Rhea" id="RHEA:21540"/>
        <dbReference type="ChEBI" id="CHEBI:18277"/>
        <dbReference type="ChEBI" id="CHEBI:58613"/>
        <dbReference type="EC" id="5.3.1.24"/>
    </reaction>
</comment>
<comment type="pathway">
    <text evidence="1">Amino-acid biosynthesis; L-tryptophan biosynthesis; L-tryptophan from chorismate: step 3/5.</text>
</comment>
<comment type="similarity">
    <text evidence="1">Belongs to the TrpF family.</text>
</comment>
<name>TRPF_NITMU</name>
<sequence>MSIRVKVCGITRVEDALAAVHLGANAVGFVFWEQSARYISPAEARGIVSTLPPFVTSVGVYVDPEAGWVDESISVAGLNLLQFHGSESPEFCQQFSLPYIKAVRVRPGLDLLQYASLYTGATGLLLDTYVEGEPGGTGEAFDWNLIPRNLPLPLILSGGLHAGNVTSAIQQAHPWAVDVSSGVEAAKGIKDSGKIAAFMRGVGISESL</sequence>
<keyword id="KW-0028">Amino-acid biosynthesis</keyword>
<keyword id="KW-0057">Aromatic amino acid biosynthesis</keyword>
<keyword id="KW-0413">Isomerase</keyword>
<keyword id="KW-1185">Reference proteome</keyword>
<keyword id="KW-0822">Tryptophan biosynthesis</keyword>
<accession>Q2Y7R3</accession>
<organism>
    <name type="scientific">Nitrosospira multiformis (strain ATCC 25196 / NCIMB 11849 / C 71)</name>
    <dbReference type="NCBI Taxonomy" id="323848"/>
    <lineage>
        <taxon>Bacteria</taxon>
        <taxon>Pseudomonadati</taxon>
        <taxon>Pseudomonadota</taxon>
        <taxon>Betaproteobacteria</taxon>
        <taxon>Nitrosomonadales</taxon>
        <taxon>Nitrosomonadaceae</taxon>
        <taxon>Nitrosospira</taxon>
    </lineage>
</organism>
<proteinExistence type="inferred from homology"/>
<gene>
    <name evidence="1" type="primary">trpF</name>
    <name type="ordered locus">Nmul_A1913</name>
</gene>